<gene>
    <name evidence="1" type="primary">recA</name>
    <name type="ordered locus">EFER_0375</name>
</gene>
<evidence type="ECO:0000255" key="1">
    <source>
        <dbReference type="HAMAP-Rule" id="MF_00268"/>
    </source>
</evidence>
<evidence type="ECO:0000256" key="2">
    <source>
        <dbReference type="SAM" id="MobiDB-lite"/>
    </source>
</evidence>
<accession>B7LW30</accession>
<reference key="1">
    <citation type="journal article" date="2009" name="PLoS Genet.">
        <title>Organised genome dynamics in the Escherichia coli species results in highly diverse adaptive paths.</title>
        <authorList>
            <person name="Touchon M."/>
            <person name="Hoede C."/>
            <person name="Tenaillon O."/>
            <person name="Barbe V."/>
            <person name="Baeriswyl S."/>
            <person name="Bidet P."/>
            <person name="Bingen E."/>
            <person name="Bonacorsi S."/>
            <person name="Bouchier C."/>
            <person name="Bouvet O."/>
            <person name="Calteau A."/>
            <person name="Chiapello H."/>
            <person name="Clermont O."/>
            <person name="Cruveiller S."/>
            <person name="Danchin A."/>
            <person name="Diard M."/>
            <person name="Dossat C."/>
            <person name="Karoui M.E."/>
            <person name="Frapy E."/>
            <person name="Garry L."/>
            <person name="Ghigo J.M."/>
            <person name="Gilles A.M."/>
            <person name="Johnson J."/>
            <person name="Le Bouguenec C."/>
            <person name="Lescat M."/>
            <person name="Mangenot S."/>
            <person name="Martinez-Jehanne V."/>
            <person name="Matic I."/>
            <person name="Nassif X."/>
            <person name="Oztas S."/>
            <person name="Petit M.A."/>
            <person name="Pichon C."/>
            <person name="Rouy Z."/>
            <person name="Ruf C.S."/>
            <person name="Schneider D."/>
            <person name="Tourret J."/>
            <person name="Vacherie B."/>
            <person name="Vallenet D."/>
            <person name="Medigue C."/>
            <person name="Rocha E.P.C."/>
            <person name="Denamur E."/>
        </authorList>
    </citation>
    <scope>NUCLEOTIDE SEQUENCE [LARGE SCALE GENOMIC DNA]</scope>
    <source>
        <strain>ATCC 35469 / DSM 13698 / BCRC 15582 / CCUG 18766 / IAM 14443 / JCM 21226 / LMG 7866 / NBRC 102419 / NCTC 12128 / CDC 0568-73</strain>
    </source>
</reference>
<keyword id="KW-0067">ATP-binding</keyword>
<keyword id="KW-0963">Cytoplasm</keyword>
<keyword id="KW-0227">DNA damage</keyword>
<keyword id="KW-0233">DNA recombination</keyword>
<keyword id="KW-0234">DNA repair</keyword>
<keyword id="KW-0238">DNA-binding</keyword>
<keyword id="KW-0547">Nucleotide-binding</keyword>
<keyword id="KW-0742">SOS response</keyword>
<feature type="chain" id="PRO_1000193314" description="Protein RecA">
    <location>
        <begin position="1"/>
        <end position="353"/>
    </location>
</feature>
<feature type="region of interest" description="Disordered" evidence="2">
    <location>
        <begin position="330"/>
        <end position="353"/>
    </location>
</feature>
<feature type="compositionally biased region" description="Acidic residues" evidence="2">
    <location>
        <begin position="339"/>
        <end position="353"/>
    </location>
</feature>
<feature type="binding site" evidence="1">
    <location>
        <begin position="67"/>
        <end position="74"/>
    </location>
    <ligand>
        <name>ATP</name>
        <dbReference type="ChEBI" id="CHEBI:30616"/>
    </ligand>
</feature>
<comment type="function">
    <text evidence="1">Can catalyze the hydrolysis of ATP in the presence of single-stranded DNA, the ATP-dependent uptake of single-stranded DNA by duplex DNA, and the ATP-dependent hybridization of homologous single-stranded DNAs. It interacts with LexA causing its activation and leading to its autocatalytic cleavage.</text>
</comment>
<comment type="subcellular location">
    <subcellularLocation>
        <location evidence="1">Cytoplasm</location>
    </subcellularLocation>
</comment>
<comment type="similarity">
    <text evidence="1">Belongs to the RecA family.</text>
</comment>
<sequence>MAIDENKQKALAAALGQIEKQFGKGSIMRLGEDRSMDVETISTGSLSLDIALGAGGLPMGRIVEIYGPESSGKTTLTLQVIAAAQREGKTCAFIDAEHALDPIYARKLGVDIDNLLCSQPDTGEQALEICDALARSGAVDVIVVDSVAALTPKAEIEGEIGDSHMGLAARMMSQAMRKLAGNLKQSNTLLIFINQIRMKIGVMFGNPETTTGGNALKFYASVRLDIRRIGAVKEGENVVGSETRVKVVKNKIAAPFKQAEFQILYGEGINFYGELVDLGVKEKLIEKAGAWYSYKGEKIGQGKANATAWLKDNPETAKEIEKKVRELLLSNPNSTPDFSVDDSEGVAETNEDF</sequence>
<dbReference type="EMBL" id="CU928158">
    <property type="protein sequence ID" value="CAQ87936.1"/>
    <property type="molecule type" value="Genomic_DNA"/>
</dbReference>
<dbReference type="RefSeq" id="WP_000963143.1">
    <property type="nucleotide sequence ID" value="NC_011740.1"/>
</dbReference>
<dbReference type="SMR" id="B7LW30"/>
<dbReference type="GeneID" id="93779312"/>
<dbReference type="KEGG" id="efe:EFER_0375"/>
<dbReference type="HOGENOM" id="CLU_040469_3_2_6"/>
<dbReference type="OrthoDB" id="9776733at2"/>
<dbReference type="Proteomes" id="UP000000745">
    <property type="component" value="Chromosome"/>
</dbReference>
<dbReference type="GO" id="GO:0005829">
    <property type="term" value="C:cytosol"/>
    <property type="evidence" value="ECO:0007669"/>
    <property type="project" value="TreeGrafter"/>
</dbReference>
<dbReference type="GO" id="GO:0005524">
    <property type="term" value="F:ATP binding"/>
    <property type="evidence" value="ECO:0007669"/>
    <property type="project" value="UniProtKB-UniRule"/>
</dbReference>
<dbReference type="GO" id="GO:0016887">
    <property type="term" value="F:ATP hydrolysis activity"/>
    <property type="evidence" value="ECO:0007669"/>
    <property type="project" value="InterPro"/>
</dbReference>
<dbReference type="GO" id="GO:0140664">
    <property type="term" value="F:ATP-dependent DNA damage sensor activity"/>
    <property type="evidence" value="ECO:0007669"/>
    <property type="project" value="InterPro"/>
</dbReference>
<dbReference type="GO" id="GO:0003684">
    <property type="term" value="F:damaged DNA binding"/>
    <property type="evidence" value="ECO:0007669"/>
    <property type="project" value="UniProtKB-UniRule"/>
</dbReference>
<dbReference type="GO" id="GO:0003697">
    <property type="term" value="F:single-stranded DNA binding"/>
    <property type="evidence" value="ECO:0007669"/>
    <property type="project" value="UniProtKB-UniRule"/>
</dbReference>
<dbReference type="GO" id="GO:0006310">
    <property type="term" value="P:DNA recombination"/>
    <property type="evidence" value="ECO:0007669"/>
    <property type="project" value="UniProtKB-UniRule"/>
</dbReference>
<dbReference type="GO" id="GO:0006281">
    <property type="term" value="P:DNA repair"/>
    <property type="evidence" value="ECO:0007669"/>
    <property type="project" value="UniProtKB-UniRule"/>
</dbReference>
<dbReference type="GO" id="GO:0009432">
    <property type="term" value="P:SOS response"/>
    <property type="evidence" value="ECO:0007669"/>
    <property type="project" value="UniProtKB-UniRule"/>
</dbReference>
<dbReference type="CDD" id="cd00983">
    <property type="entry name" value="RecA"/>
    <property type="match status" value="1"/>
</dbReference>
<dbReference type="FunFam" id="3.40.50.300:FF:000087">
    <property type="entry name" value="Recombinase RecA"/>
    <property type="match status" value="1"/>
</dbReference>
<dbReference type="Gene3D" id="3.40.50.300">
    <property type="entry name" value="P-loop containing nucleotide triphosphate hydrolases"/>
    <property type="match status" value="1"/>
</dbReference>
<dbReference type="HAMAP" id="MF_00268">
    <property type="entry name" value="RecA"/>
    <property type="match status" value="1"/>
</dbReference>
<dbReference type="InterPro" id="IPR003593">
    <property type="entry name" value="AAA+_ATPase"/>
</dbReference>
<dbReference type="InterPro" id="IPR013765">
    <property type="entry name" value="DNA_recomb/repair_RecA"/>
</dbReference>
<dbReference type="InterPro" id="IPR020584">
    <property type="entry name" value="DNA_recomb/repair_RecA_CS"/>
</dbReference>
<dbReference type="InterPro" id="IPR027417">
    <property type="entry name" value="P-loop_NTPase"/>
</dbReference>
<dbReference type="InterPro" id="IPR049261">
    <property type="entry name" value="RecA-like_C"/>
</dbReference>
<dbReference type="InterPro" id="IPR049428">
    <property type="entry name" value="RecA-like_N"/>
</dbReference>
<dbReference type="InterPro" id="IPR020588">
    <property type="entry name" value="RecA_ATP-bd"/>
</dbReference>
<dbReference type="InterPro" id="IPR023400">
    <property type="entry name" value="RecA_C_sf"/>
</dbReference>
<dbReference type="InterPro" id="IPR020587">
    <property type="entry name" value="RecA_monomer-monomer_interface"/>
</dbReference>
<dbReference type="NCBIfam" id="TIGR02012">
    <property type="entry name" value="tigrfam_recA"/>
    <property type="match status" value="1"/>
</dbReference>
<dbReference type="PANTHER" id="PTHR45900:SF1">
    <property type="entry name" value="MITOCHONDRIAL DNA REPAIR PROTEIN RECA HOMOLOG-RELATED"/>
    <property type="match status" value="1"/>
</dbReference>
<dbReference type="PANTHER" id="PTHR45900">
    <property type="entry name" value="RECA"/>
    <property type="match status" value="1"/>
</dbReference>
<dbReference type="Pfam" id="PF00154">
    <property type="entry name" value="RecA"/>
    <property type="match status" value="1"/>
</dbReference>
<dbReference type="Pfam" id="PF21096">
    <property type="entry name" value="RecA_C"/>
    <property type="match status" value="1"/>
</dbReference>
<dbReference type="PRINTS" id="PR00142">
    <property type="entry name" value="RECA"/>
</dbReference>
<dbReference type="SMART" id="SM00382">
    <property type="entry name" value="AAA"/>
    <property type="match status" value="1"/>
</dbReference>
<dbReference type="SUPFAM" id="SSF52540">
    <property type="entry name" value="P-loop containing nucleoside triphosphate hydrolases"/>
    <property type="match status" value="1"/>
</dbReference>
<dbReference type="SUPFAM" id="SSF54752">
    <property type="entry name" value="RecA protein, C-terminal domain"/>
    <property type="match status" value="1"/>
</dbReference>
<dbReference type="PROSITE" id="PS00321">
    <property type="entry name" value="RECA_1"/>
    <property type="match status" value="1"/>
</dbReference>
<dbReference type="PROSITE" id="PS50162">
    <property type="entry name" value="RECA_2"/>
    <property type="match status" value="1"/>
</dbReference>
<dbReference type="PROSITE" id="PS50163">
    <property type="entry name" value="RECA_3"/>
    <property type="match status" value="1"/>
</dbReference>
<protein>
    <recommendedName>
        <fullName evidence="1">Protein RecA</fullName>
    </recommendedName>
    <alternativeName>
        <fullName evidence="1">Recombinase A</fullName>
    </alternativeName>
</protein>
<proteinExistence type="inferred from homology"/>
<organism>
    <name type="scientific">Escherichia fergusonii (strain ATCC 35469 / DSM 13698 / CCUG 18766 / IAM 14443 / JCM 21226 / LMG 7866 / NBRC 102419 / NCTC 12128 / CDC 0568-73)</name>
    <dbReference type="NCBI Taxonomy" id="585054"/>
    <lineage>
        <taxon>Bacteria</taxon>
        <taxon>Pseudomonadati</taxon>
        <taxon>Pseudomonadota</taxon>
        <taxon>Gammaproteobacteria</taxon>
        <taxon>Enterobacterales</taxon>
        <taxon>Enterobacteriaceae</taxon>
        <taxon>Escherichia</taxon>
    </lineage>
</organism>
<name>RECA_ESCF3</name>